<keyword id="KW-0240">DNA-directed RNA polymerase</keyword>
<keyword id="KW-0548">Nucleotidyltransferase</keyword>
<keyword id="KW-0804">Transcription</keyword>
<keyword id="KW-0808">Transferase</keyword>
<feature type="chain" id="PRO_0000300428" description="DNA-directed RNA polymerase subunit beta">
    <location>
        <begin position="1"/>
        <end position="1342"/>
    </location>
</feature>
<name>RPOB_YERPP</name>
<dbReference type="EC" id="2.7.7.6" evidence="1"/>
<dbReference type="EMBL" id="CP000668">
    <property type="protein sequence ID" value="ABP42091.1"/>
    <property type="molecule type" value="Genomic_DNA"/>
</dbReference>
<dbReference type="RefSeq" id="WP_002210676.1">
    <property type="nucleotide sequence ID" value="NZ_CP009715.1"/>
</dbReference>
<dbReference type="SMR" id="A4TS29"/>
<dbReference type="GeneID" id="57974971"/>
<dbReference type="KEGG" id="ypp:YPDSF_3745"/>
<dbReference type="PATRIC" id="fig|386656.14.peg.779"/>
<dbReference type="GO" id="GO:0000428">
    <property type="term" value="C:DNA-directed RNA polymerase complex"/>
    <property type="evidence" value="ECO:0007669"/>
    <property type="project" value="UniProtKB-KW"/>
</dbReference>
<dbReference type="GO" id="GO:0003677">
    <property type="term" value="F:DNA binding"/>
    <property type="evidence" value="ECO:0007669"/>
    <property type="project" value="UniProtKB-UniRule"/>
</dbReference>
<dbReference type="GO" id="GO:0003899">
    <property type="term" value="F:DNA-directed RNA polymerase activity"/>
    <property type="evidence" value="ECO:0007669"/>
    <property type="project" value="UniProtKB-UniRule"/>
</dbReference>
<dbReference type="GO" id="GO:0032549">
    <property type="term" value="F:ribonucleoside binding"/>
    <property type="evidence" value="ECO:0007669"/>
    <property type="project" value="InterPro"/>
</dbReference>
<dbReference type="GO" id="GO:0006351">
    <property type="term" value="P:DNA-templated transcription"/>
    <property type="evidence" value="ECO:0007669"/>
    <property type="project" value="UniProtKB-UniRule"/>
</dbReference>
<dbReference type="CDD" id="cd00653">
    <property type="entry name" value="RNA_pol_B_RPB2"/>
    <property type="match status" value="1"/>
</dbReference>
<dbReference type="FunFam" id="2.30.150.10:FF:000001">
    <property type="entry name" value="DNA-directed RNA polymerase subunit beta"/>
    <property type="match status" value="1"/>
</dbReference>
<dbReference type="FunFam" id="2.40.270.10:FF:000003">
    <property type="entry name" value="DNA-directed RNA polymerase subunit beta"/>
    <property type="match status" value="1"/>
</dbReference>
<dbReference type="FunFam" id="2.40.270.10:FF:000004">
    <property type="entry name" value="DNA-directed RNA polymerase subunit beta"/>
    <property type="match status" value="1"/>
</dbReference>
<dbReference type="FunFam" id="2.40.50.100:FF:000006">
    <property type="entry name" value="DNA-directed RNA polymerase subunit beta"/>
    <property type="match status" value="1"/>
</dbReference>
<dbReference type="FunFam" id="2.40.50.150:FF:000001">
    <property type="entry name" value="DNA-directed RNA polymerase subunit beta"/>
    <property type="match status" value="1"/>
</dbReference>
<dbReference type="FunFam" id="3.90.1100.10:FF:000002">
    <property type="entry name" value="DNA-directed RNA polymerase subunit beta"/>
    <property type="match status" value="1"/>
</dbReference>
<dbReference type="FunFam" id="3.90.1110.10:FF:000001">
    <property type="entry name" value="DNA-directed RNA polymerase subunit beta"/>
    <property type="match status" value="1"/>
</dbReference>
<dbReference type="FunFam" id="3.90.1110.10:FF:000004">
    <property type="entry name" value="DNA-directed RNA polymerase subunit beta"/>
    <property type="match status" value="1"/>
</dbReference>
<dbReference type="FunFam" id="3.90.1800.10:FF:000001">
    <property type="entry name" value="DNA-directed RNA polymerase subunit beta"/>
    <property type="match status" value="1"/>
</dbReference>
<dbReference type="Gene3D" id="2.40.50.100">
    <property type="match status" value="1"/>
</dbReference>
<dbReference type="Gene3D" id="2.40.50.150">
    <property type="match status" value="1"/>
</dbReference>
<dbReference type="Gene3D" id="3.90.1100.10">
    <property type="match status" value="2"/>
</dbReference>
<dbReference type="Gene3D" id="2.30.150.10">
    <property type="entry name" value="DNA-directed RNA polymerase, beta subunit, external 1 domain"/>
    <property type="match status" value="1"/>
</dbReference>
<dbReference type="Gene3D" id="2.40.270.10">
    <property type="entry name" value="DNA-directed RNA polymerase, subunit 2, domain 6"/>
    <property type="match status" value="1"/>
</dbReference>
<dbReference type="Gene3D" id="3.90.1800.10">
    <property type="entry name" value="RNA polymerase alpha subunit dimerisation domain"/>
    <property type="match status" value="1"/>
</dbReference>
<dbReference type="Gene3D" id="3.90.1110.10">
    <property type="entry name" value="RNA polymerase Rpb2, domain 2"/>
    <property type="match status" value="1"/>
</dbReference>
<dbReference type="HAMAP" id="MF_01321">
    <property type="entry name" value="RNApol_bact_RpoB"/>
    <property type="match status" value="1"/>
</dbReference>
<dbReference type="InterPro" id="IPR042107">
    <property type="entry name" value="DNA-dir_RNA_pol_bsu_ext_1_sf"/>
</dbReference>
<dbReference type="InterPro" id="IPR019462">
    <property type="entry name" value="DNA-dir_RNA_pol_bsu_external_1"/>
</dbReference>
<dbReference type="InterPro" id="IPR015712">
    <property type="entry name" value="DNA-dir_RNA_pol_su2"/>
</dbReference>
<dbReference type="InterPro" id="IPR007120">
    <property type="entry name" value="DNA-dir_RNAP_su2_dom"/>
</dbReference>
<dbReference type="InterPro" id="IPR037033">
    <property type="entry name" value="DNA-dir_RNAP_su2_hyb_sf"/>
</dbReference>
<dbReference type="InterPro" id="IPR010243">
    <property type="entry name" value="RNA_pol_bsu_bac"/>
</dbReference>
<dbReference type="InterPro" id="IPR007121">
    <property type="entry name" value="RNA_pol_bsu_CS"/>
</dbReference>
<dbReference type="InterPro" id="IPR007644">
    <property type="entry name" value="RNA_pol_bsu_protrusion"/>
</dbReference>
<dbReference type="InterPro" id="IPR007642">
    <property type="entry name" value="RNA_pol_Rpb2_2"/>
</dbReference>
<dbReference type="InterPro" id="IPR037034">
    <property type="entry name" value="RNA_pol_Rpb2_2_sf"/>
</dbReference>
<dbReference type="InterPro" id="IPR007645">
    <property type="entry name" value="RNA_pol_Rpb2_3"/>
</dbReference>
<dbReference type="InterPro" id="IPR007641">
    <property type="entry name" value="RNA_pol_Rpb2_7"/>
</dbReference>
<dbReference type="InterPro" id="IPR014724">
    <property type="entry name" value="RNA_pol_RPB2_OB-fold"/>
</dbReference>
<dbReference type="NCBIfam" id="NF001616">
    <property type="entry name" value="PRK00405.1"/>
    <property type="match status" value="1"/>
</dbReference>
<dbReference type="NCBIfam" id="TIGR02013">
    <property type="entry name" value="rpoB"/>
    <property type="match status" value="1"/>
</dbReference>
<dbReference type="PANTHER" id="PTHR20856">
    <property type="entry name" value="DNA-DIRECTED RNA POLYMERASE I SUBUNIT 2"/>
    <property type="match status" value="1"/>
</dbReference>
<dbReference type="Pfam" id="PF04563">
    <property type="entry name" value="RNA_pol_Rpb2_1"/>
    <property type="match status" value="1"/>
</dbReference>
<dbReference type="Pfam" id="PF04561">
    <property type="entry name" value="RNA_pol_Rpb2_2"/>
    <property type="match status" value="2"/>
</dbReference>
<dbReference type="Pfam" id="PF04565">
    <property type="entry name" value="RNA_pol_Rpb2_3"/>
    <property type="match status" value="1"/>
</dbReference>
<dbReference type="Pfam" id="PF10385">
    <property type="entry name" value="RNA_pol_Rpb2_45"/>
    <property type="match status" value="1"/>
</dbReference>
<dbReference type="Pfam" id="PF00562">
    <property type="entry name" value="RNA_pol_Rpb2_6"/>
    <property type="match status" value="1"/>
</dbReference>
<dbReference type="Pfam" id="PF04560">
    <property type="entry name" value="RNA_pol_Rpb2_7"/>
    <property type="match status" value="1"/>
</dbReference>
<dbReference type="SUPFAM" id="SSF64484">
    <property type="entry name" value="beta and beta-prime subunits of DNA dependent RNA-polymerase"/>
    <property type="match status" value="1"/>
</dbReference>
<dbReference type="PROSITE" id="PS01166">
    <property type="entry name" value="RNA_POL_BETA"/>
    <property type="match status" value="1"/>
</dbReference>
<comment type="function">
    <text evidence="1">DNA-dependent RNA polymerase catalyzes the transcription of DNA into RNA using the four ribonucleoside triphosphates as substrates.</text>
</comment>
<comment type="catalytic activity">
    <reaction evidence="1">
        <text>RNA(n) + a ribonucleoside 5'-triphosphate = RNA(n+1) + diphosphate</text>
        <dbReference type="Rhea" id="RHEA:21248"/>
        <dbReference type="Rhea" id="RHEA-COMP:14527"/>
        <dbReference type="Rhea" id="RHEA-COMP:17342"/>
        <dbReference type="ChEBI" id="CHEBI:33019"/>
        <dbReference type="ChEBI" id="CHEBI:61557"/>
        <dbReference type="ChEBI" id="CHEBI:140395"/>
        <dbReference type="EC" id="2.7.7.6"/>
    </reaction>
</comment>
<comment type="subunit">
    <text evidence="1">The RNAP catalytic core consists of 2 alpha, 1 beta, 1 beta' and 1 omega subunit. When a sigma factor is associated with the core the holoenzyme is formed, which can initiate transcription.</text>
</comment>
<comment type="similarity">
    <text evidence="1">Belongs to the RNA polymerase beta chain family.</text>
</comment>
<gene>
    <name evidence="1" type="primary">rpoB</name>
    <name type="ordered locus">YPDSF_3745</name>
</gene>
<evidence type="ECO:0000255" key="1">
    <source>
        <dbReference type="HAMAP-Rule" id="MF_01321"/>
    </source>
</evidence>
<accession>A4TS29</accession>
<organism>
    <name type="scientific">Yersinia pestis (strain Pestoides F)</name>
    <dbReference type="NCBI Taxonomy" id="386656"/>
    <lineage>
        <taxon>Bacteria</taxon>
        <taxon>Pseudomonadati</taxon>
        <taxon>Pseudomonadota</taxon>
        <taxon>Gammaproteobacteria</taxon>
        <taxon>Enterobacterales</taxon>
        <taxon>Yersiniaceae</taxon>
        <taxon>Yersinia</taxon>
    </lineage>
</organism>
<proteinExistence type="inferred from homology"/>
<sequence length="1342" mass="150389">MVYSYTEKKRIRKDFGKRPQVLDIPYLLSIQLDSFQKFIEQDPEGQHGLEAAFRSVFPIQSYSGNSELQYVSYRLGEPVFDVKECQIRGVTYSAPLRVKLRLVIYEREAPEGTVKDIKEQEVYMGEIPLMTENGTFVINGTERVIVSQLHRSPGVFFDSDKGKTHSSGKVLYNARIIPYRGSWLDFEFDPKDNLFVRIDRRRKLPATIILRALNFTTAQILDLFFEKVVFEIRDNKLQMELVPERLRGETASFDIEANGKVYVEKARRITARHIRQLEKDGIDRIEVPVEYIAGKVVAKDYVDASTGELICAANMELSLDLLAKLSQAGHKQIETLFTNDLDHGAYISETLRVDPTSDRLSALVEIYRMMRPGEPPTREAAENLFENLFFSEDRYDLSAVGRMKFNRSLLRDEIEGSGILSKEDITEVMKKLIDIRNGRGEVDDIDHLGNRRIRSVGEMAENQFRVGLVRVERAVKERLSLGDLDTLMPQDMINAKPISAAVKEFFGSSQLSQFMDQNNPLSEITHKRRISALGPGGLTRERAGFEVRDVHPTHYGRVCPIETPEGPNIGLINSLSVYAQTNEYGFLETPYRRVRDGVVTDEINYLSAIEEGNFVIAQANSNLDDEGRFLEDLVTCRSKGESSLFSREQVDYMDVSTQQIVSVGASLIPFLEHDDANRALMGANMQRQAVPTLRADKPLVGTGMERAVAVDSGVTSVAKRGGTVQYVDASRIVIKVNEDEMHPGEAGIDIYNLTKYTRSNQNTCINQMPCVNLGEPIERGDVLADGPSTDLGELALGQNMRVAFMPWNGYNFEDSILVSERVVQEDRFTTIHIQELACVSRDTKLGPEEITADIPNVGEAALSKLDESGIVYIGAEVTGGDILVGKVTPKGETQLTPEEKLLRAIFGEKASDVKDSSLRVPNGVSGTVIDVQVFTRDGVEKDKRALEIEEMQLKQAKKDLTEELQILEAGLFARIHAVLVSGGIEAEKLSKLPRERWLELGLTDEDKQNQLEQLAEQYDEMKSEFEKKMDAKRRKITQGDDLAPGVLKIVKVYLAVKRQIQPGDKMAGRHGNKGVISKINPIEDMPYDENGTPVDIVLNPLGVPSRMNIGQILETHLGMAAKGIGEKINAMLKKQEEVAKLREFIQKAYDLGDNVCQKVDLSTFTDDEVLRLAENLKKGMPIATPVFDGATEKEIKELLQLGGLPTSGQITLFDGRTGEQFERQVTVGYMYMLKLNHLVDDKMHARSTGSYSLVTQQPLGGKAQFGGQRFGEMEVWALEAYGAAYTLQEMLTVKSDDVNGRTKMYKNIVDGDHRMEPGMPESFNVLLKEIRSLGINIELEEE</sequence>
<reference key="1">
    <citation type="submission" date="2007-02" db="EMBL/GenBank/DDBJ databases">
        <title>Complete sequence of chromosome of Yersinia pestis Pestoides F.</title>
        <authorList>
            <consortium name="US DOE Joint Genome Institute"/>
            <person name="Copeland A."/>
            <person name="Lucas S."/>
            <person name="Lapidus A."/>
            <person name="Barry K."/>
            <person name="Detter J.C."/>
            <person name="Glavina del Rio T."/>
            <person name="Hammon N."/>
            <person name="Israni S."/>
            <person name="Dalin E."/>
            <person name="Tice H."/>
            <person name="Pitluck S."/>
            <person name="Di Bartolo G."/>
            <person name="Chain P."/>
            <person name="Malfatti S."/>
            <person name="Shin M."/>
            <person name="Vergez L."/>
            <person name="Schmutz J."/>
            <person name="Larimer F."/>
            <person name="Land M."/>
            <person name="Hauser L."/>
            <person name="Worsham P."/>
            <person name="Chu M."/>
            <person name="Bearden S."/>
            <person name="Garcia E."/>
            <person name="Richardson P."/>
        </authorList>
    </citation>
    <scope>NUCLEOTIDE SEQUENCE [LARGE SCALE GENOMIC DNA]</scope>
    <source>
        <strain>Pestoides F</strain>
    </source>
</reference>
<protein>
    <recommendedName>
        <fullName evidence="1">DNA-directed RNA polymerase subunit beta</fullName>
        <shortName evidence="1">RNAP subunit beta</shortName>
        <ecNumber evidence="1">2.7.7.6</ecNumber>
    </recommendedName>
    <alternativeName>
        <fullName evidence="1">RNA polymerase subunit beta</fullName>
    </alternativeName>
    <alternativeName>
        <fullName evidence="1">Transcriptase subunit beta</fullName>
    </alternativeName>
</protein>